<accession>A5CYE3</accession>
<keyword id="KW-0066">ATP synthesis</keyword>
<keyword id="KW-1003">Cell membrane</keyword>
<keyword id="KW-0139">CF(1)</keyword>
<keyword id="KW-0375">Hydrogen ion transport</keyword>
<keyword id="KW-0406">Ion transport</keyword>
<keyword id="KW-0472">Membrane</keyword>
<keyword id="KW-1185">Reference proteome</keyword>
<keyword id="KW-0813">Transport</keyword>
<reference key="1">
    <citation type="journal article" date="2008" name="Genome Res.">
        <title>The genome of Pelotomaculum thermopropionicum reveals niche-associated evolution in anaerobic microbiota.</title>
        <authorList>
            <person name="Kosaka T."/>
            <person name="Kato S."/>
            <person name="Shimoyama T."/>
            <person name="Ishii S."/>
            <person name="Abe T."/>
            <person name="Watanabe K."/>
        </authorList>
    </citation>
    <scope>NUCLEOTIDE SEQUENCE [LARGE SCALE GENOMIC DNA]</scope>
    <source>
        <strain>DSM 13744 / JCM 10971 / SI</strain>
    </source>
</reference>
<feature type="chain" id="PRO_1000083797" description="ATP synthase gamma chain">
    <location>
        <begin position="1"/>
        <end position="284"/>
    </location>
</feature>
<comment type="function">
    <text evidence="1">Produces ATP from ADP in the presence of a proton gradient across the membrane. The gamma chain is believed to be important in regulating ATPase activity and the flow of protons through the CF(0) complex.</text>
</comment>
<comment type="subunit">
    <text evidence="1">F-type ATPases have 2 components, CF(1) - the catalytic core - and CF(0) - the membrane proton channel. CF(1) has five subunits: alpha(3), beta(3), gamma(1), delta(1), epsilon(1). CF(0) has three main subunits: a, b and c.</text>
</comment>
<comment type="subcellular location">
    <subcellularLocation>
        <location evidence="1">Cell membrane</location>
        <topology evidence="1">Peripheral membrane protein</topology>
    </subcellularLocation>
</comment>
<comment type="similarity">
    <text evidence="1">Belongs to the ATPase gamma chain family.</text>
</comment>
<sequence length="284" mass="31442">MPSLRDLRRRIKSIKSTQQITKAMKAVSAAKMRKAQEAVLSARPYSKRLKSVLGRVAVASGGVSHPLLAVREPKKVAYIVITADRGLCGGFNSNVIRRATQEMREQSAELSLITVGRKSRDFFRRRGYNIAQQYVGLGEEIKYGTAKEIASFVIEKYSAGEYDVVYLVYSQFVNILVQKPVVVKLLPAEPPEEEGEARKVEYIFEPSAAAVLTELLPKYIENAIYQGLLESKAGEHSARMTAMDNATKNASDMIDRLTLSMNRARQAQITKEISEIVGGAAALE</sequence>
<organism>
    <name type="scientific">Pelotomaculum thermopropionicum (strain DSM 13744 / JCM 10971 / SI)</name>
    <dbReference type="NCBI Taxonomy" id="370438"/>
    <lineage>
        <taxon>Bacteria</taxon>
        <taxon>Bacillati</taxon>
        <taxon>Bacillota</taxon>
        <taxon>Clostridia</taxon>
        <taxon>Eubacteriales</taxon>
        <taxon>Desulfotomaculaceae</taxon>
        <taxon>Pelotomaculum</taxon>
    </lineage>
</organism>
<protein>
    <recommendedName>
        <fullName evidence="1">ATP synthase gamma chain</fullName>
    </recommendedName>
    <alternativeName>
        <fullName evidence="1">ATP synthase F1 sector gamma subunit</fullName>
    </alternativeName>
    <alternativeName>
        <fullName evidence="1">F-ATPase gamma subunit</fullName>
    </alternativeName>
</protein>
<gene>
    <name evidence="1" type="primary">atpG</name>
    <name type="ordered locus">PTH_2813</name>
</gene>
<name>ATPG_PELTS</name>
<evidence type="ECO:0000255" key="1">
    <source>
        <dbReference type="HAMAP-Rule" id="MF_00815"/>
    </source>
</evidence>
<dbReference type="EMBL" id="AP009389">
    <property type="protein sequence ID" value="BAF60994.1"/>
    <property type="molecule type" value="Genomic_DNA"/>
</dbReference>
<dbReference type="SMR" id="A5CYE3"/>
<dbReference type="STRING" id="370438.PTH_2813"/>
<dbReference type="KEGG" id="pth:PTH_2813"/>
<dbReference type="eggNOG" id="COG0224">
    <property type="taxonomic scope" value="Bacteria"/>
</dbReference>
<dbReference type="HOGENOM" id="CLU_050669_0_1_9"/>
<dbReference type="Proteomes" id="UP000006556">
    <property type="component" value="Chromosome"/>
</dbReference>
<dbReference type="GO" id="GO:0005886">
    <property type="term" value="C:plasma membrane"/>
    <property type="evidence" value="ECO:0007669"/>
    <property type="project" value="UniProtKB-SubCell"/>
</dbReference>
<dbReference type="GO" id="GO:0045259">
    <property type="term" value="C:proton-transporting ATP synthase complex"/>
    <property type="evidence" value="ECO:0007669"/>
    <property type="project" value="UniProtKB-KW"/>
</dbReference>
<dbReference type="GO" id="GO:0005524">
    <property type="term" value="F:ATP binding"/>
    <property type="evidence" value="ECO:0007669"/>
    <property type="project" value="UniProtKB-UniRule"/>
</dbReference>
<dbReference type="GO" id="GO:0046933">
    <property type="term" value="F:proton-transporting ATP synthase activity, rotational mechanism"/>
    <property type="evidence" value="ECO:0007669"/>
    <property type="project" value="UniProtKB-UniRule"/>
</dbReference>
<dbReference type="GO" id="GO:0042777">
    <property type="term" value="P:proton motive force-driven plasma membrane ATP synthesis"/>
    <property type="evidence" value="ECO:0007669"/>
    <property type="project" value="UniProtKB-UniRule"/>
</dbReference>
<dbReference type="CDD" id="cd12151">
    <property type="entry name" value="F1-ATPase_gamma"/>
    <property type="match status" value="1"/>
</dbReference>
<dbReference type="FunFam" id="3.40.1380.10:FF:000006">
    <property type="entry name" value="ATP synthase gamma chain"/>
    <property type="match status" value="1"/>
</dbReference>
<dbReference type="FunFam" id="1.10.287.80:FF:000003">
    <property type="entry name" value="ATP synthase gamma chain, chloroplastic"/>
    <property type="match status" value="1"/>
</dbReference>
<dbReference type="Gene3D" id="3.40.1380.10">
    <property type="match status" value="1"/>
</dbReference>
<dbReference type="Gene3D" id="1.10.287.80">
    <property type="entry name" value="ATP synthase, gamma subunit, helix hairpin domain"/>
    <property type="match status" value="2"/>
</dbReference>
<dbReference type="HAMAP" id="MF_00815">
    <property type="entry name" value="ATP_synth_gamma_bact"/>
    <property type="match status" value="1"/>
</dbReference>
<dbReference type="InterPro" id="IPR035968">
    <property type="entry name" value="ATP_synth_F1_ATPase_gsu"/>
</dbReference>
<dbReference type="InterPro" id="IPR000131">
    <property type="entry name" value="ATP_synth_F1_gsu"/>
</dbReference>
<dbReference type="InterPro" id="IPR023632">
    <property type="entry name" value="ATP_synth_F1_gsu_CS"/>
</dbReference>
<dbReference type="NCBIfam" id="TIGR01146">
    <property type="entry name" value="ATPsyn_F1gamma"/>
    <property type="match status" value="1"/>
</dbReference>
<dbReference type="PANTHER" id="PTHR11693">
    <property type="entry name" value="ATP SYNTHASE GAMMA CHAIN"/>
    <property type="match status" value="1"/>
</dbReference>
<dbReference type="PANTHER" id="PTHR11693:SF22">
    <property type="entry name" value="ATP SYNTHASE SUBUNIT GAMMA, MITOCHONDRIAL"/>
    <property type="match status" value="1"/>
</dbReference>
<dbReference type="Pfam" id="PF00231">
    <property type="entry name" value="ATP-synt"/>
    <property type="match status" value="1"/>
</dbReference>
<dbReference type="PRINTS" id="PR00126">
    <property type="entry name" value="ATPASEGAMMA"/>
</dbReference>
<dbReference type="SUPFAM" id="SSF52943">
    <property type="entry name" value="ATP synthase (F1-ATPase), gamma subunit"/>
    <property type="match status" value="1"/>
</dbReference>
<dbReference type="PROSITE" id="PS00153">
    <property type="entry name" value="ATPASE_GAMMA"/>
    <property type="match status" value="1"/>
</dbReference>
<proteinExistence type="inferred from homology"/>